<dbReference type="EMBL" id="AF026305">
    <property type="protein sequence ID" value="AAC09169.1"/>
    <property type="molecule type" value="mRNA"/>
</dbReference>
<dbReference type="EMBL" id="AB025922">
    <property type="protein sequence ID" value="BAA85004.1"/>
    <property type="molecule type" value="mRNA"/>
</dbReference>
<dbReference type="EMBL" id="AC114678">
    <property type="status" value="NOT_ANNOTATED_CDS"/>
    <property type="molecule type" value="Genomic_DNA"/>
</dbReference>
<dbReference type="EMBL" id="CH466578">
    <property type="protein sequence ID" value="EDL24501.1"/>
    <property type="molecule type" value="Genomic_DNA"/>
</dbReference>
<dbReference type="CCDS" id="CCDS24238.1"/>
<dbReference type="RefSeq" id="NP_034426.2">
    <property type="nucleotide sequence ID" value="NM_010296.2"/>
</dbReference>
<dbReference type="SMR" id="P47806"/>
<dbReference type="BioGRID" id="199942">
    <property type="interactions" value="48"/>
</dbReference>
<dbReference type="ComplexPortal" id="CPX-147">
    <property type="entry name" value="GLI1-SUFU complex"/>
</dbReference>
<dbReference type="CORUM" id="P47806"/>
<dbReference type="FunCoup" id="P47806">
    <property type="interactions" value="574"/>
</dbReference>
<dbReference type="IntAct" id="P47806">
    <property type="interactions" value="1"/>
</dbReference>
<dbReference type="STRING" id="10090.ENSMUSP00000026474"/>
<dbReference type="BindingDB" id="P47806"/>
<dbReference type="ChEMBL" id="CHEMBL5007"/>
<dbReference type="GlyGen" id="P47806">
    <property type="glycosylation" value="3 sites"/>
</dbReference>
<dbReference type="iPTMnet" id="P47806"/>
<dbReference type="PhosphoSitePlus" id="P47806"/>
<dbReference type="PaxDb" id="10090-ENSMUSP00000026474"/>
<dbReference type="ProteomicsDB" id="267728"/>
<dbReference type="Antibodypedia" id="4004">
    <property type="antibodies" value="899 antibodies from 46 providers"/>
</dbReference>
<dbReference type="DNASU" id="14632"/>
<dbReference type="Ensembl" id="ENSMUST00000026474.5">
    <property type="protein sequence ID" value="ENSMUSP00000026474.4"/>
    <property type="gene ID" value="ENSMUSG00000025407.8"/>
</dbReference>
<dbReference type="GeneID" id="14632"/>
<dbReference type="KEGG" id="mmu:14632"/>
<dbReference type="UCSC" id="uc007hjf.1">
    <property type="organism name" value="mouse"/>
</dbReference>
<dbReference type="AGR" id="MGI:95727"/>
<dbReference type="CTD" id="2735"/>
<dbReference type="MGI" id="MGI:95727">
    <property type="gene designation" value="Gli1"/>
</dbReference>
<dbReference type="VEuPathDB" id="HostDB:ENSMUSG00000025407"/>
<dbReference type="eggNOG" id="KOG1721">
    <property type="taxonomic scope" value="Eukaryota"/>
</dbReference>
<dbReference type="GeneTree" id="ENSGT00940000160235"/>
<dbReference type="HOGENOM" id="CLU_003666_0_0_1"/>
<dbReference type="InParanoid" id="P47806"/>
<dbReference type="OMA" id="RNHEQTH"/>
<dbReference type="OrthoDB" id="3214149at2759"/>
<dbReference type="PhylomeDB" id="P47806"/>
<dbReference type="TreeFam" id="TF350216"/>
<dbReference type="Reactome" id="R-MMU-5610780">
    <property type="pathway name" value="Degradation of GLI1 by the proteasome"/>
</dbReference>
<dbReference type="Reactome" id="R-MMU-5610787">
    <property type="pathway name" value="Hedgehog 'off' state"/>
</dbReference>
<dbReference type="Reactome" id="R-MMU-5632684">
    <property type="pathway name" value="Hedgehog 'on' state"/>
</dbReference>
<dbReference type="BioGRID-ORCS" id="14632">
    <property type="hits" value="3 hits in 79 CRISPR screens"/>
</dbReference>
<dbReference type="PRO" id="PR:P47806"/>
<dbReference type="Proteomes" id="UP000000589">
    <property type="component" value="Chromosome 10"/>
</dbReference>
<dbReference type="RNAct" id="P47806">
    <property type="molecule type" value="protein"/>
</dbReference>
<dbReference type="Bgee" id="ENSMUSG00000025407">
    <property type="expression patterns" value="Expressed in spermatogonium and 313 other cell types or tissues"/>
</dbReference>
<dbReference type="ExpressionAtlas" id="P47806">
    <property type="expression patterns" value="baseline and differential"/>
</dbReference>
<dbReference type="GO" id="GO:0005930">
    <property type="term" value="C:axoneme"/>
    <property type="evidence" value="ECO:0000314"/>
    <property type="project" value="CACAO"/>
</dbReference>
<dbReference type="GO" id="GO:0036064">
    <property type="term" value="C:ciliary basal body"/>
    <property type="evidence" value="ECO:0007669"/>
    <property type="project" value="Ensembl"/>
</dbReference>
<dbReference type="GO" id="GO:0005929">
    <property type="term" value="C:cilium"/>
    <property type="evidence" value="ECO:0000314"/>
    <property type="project" value="MGI"/>
</dbReference>
<dbReference type="GO" id="GO:0005737">
    <property type="term" value="C:cytoplasm"/>
    <property type="evidence" value="ECO:0000314"/>
    <property type="project" value="MGI"/>
</dbReference>
<dbReference type="GO" id="GO:1990788">
    <property type="term" value="C:GLI-SUFU complex"/>
    <property type="evidence" value="ECO:0000266"/>
    <property type="project" value="ComplexPortal"/>
</dbReference>
<dbReference type="GO" id="GO:0005654">
    <property type="term" value="C:nucleoplasm"/>
    <property type="evidence" value="ECO:0007669"/>
    <property type="project" value="Ensembl"/>
</dbReference>
<dbReference type="GO" id="GO:0005634">
    <property type="term" value="C:nucleus"/>
    <property type="evidence" value="ECO:0000314"/>
    <property type="project" value="MGI"/>
</dbReference>
<dbReference type="GO" id="GO:0005886">
    <property type="term" value="C:plasma membrane"/>
    <property type="evidence" value="ECO:0007669"/>
    <property type="project" value="Ensembl"/>
</dbReference>
<dbReference type="GO" id="GO:0003682">
    <property type="term" value="F:chromatin binding"/>
    <property type="evidence" value="ECO:0000314"/>
    <property type="project" value="MGI"/>
</dbReference>
<dbReference type="GO" id="GO:0003677">
    <property type="term" value="F:DNA binding"/>
    <property type="evidence" value="ECO:0000266"/>
    <property type="project" value="MGI"/>
</dbReference>
<dbReference type="GO" id="GO:0000981">
    <property type="term" value="F:DNA-binding transcription factor activity, RNA polymerase II-specific"/>
    <property type="evidence" value="ECO:0000314"/>
    <property type="project" value="MGI"/>
</dbReference>
<dbReference type="GO" id="GO:0008017">
    <property type="term" value="F:microtubule binding"/>
    <property type="evidence" value="ECO:0000314"/>
    <property type="project" value="MGI"/>
</dbReference>
<dbReference type="GO" id="GO:0000978">
    <property type="term" value="F:RNA polymerase II cis-regulatory region sequence-specific DNA binding"/>
    <property type="evidence" value="ECO:0000314"/>
    <property type="project" value="MGI"/>
</dbReference>
<dbReference type="GO" id="GO:0000977">
    <property type="term" value="F:RNA polymerase II transcription regulatory region sequence-specific DNA binding"/>
    <property type="evidence" value="ECO:0000266"/>
    <property type="project" value="MGI"/>
</dbReference>
<dbReference type="GO" id="GO:0043565">
    <property type="term" value="F:sequence-specific DNA binding"/>
    <property type="evidence" value="ECO:0000250"/>
    <property type="project" value="UniProtKB"/>
</dbReference>
<dbReference type="GO" id="GO:0008270">
    <property type="term" value="F:zinc ion binding"/>
    <property type="evidence" value="ECO:0007669"/>
    <property type="project" value="UniProtKB-KW"/>
</dbReference>
<dbReference type="GO" id="GO:0021696">
    <property type="term" value="P:cerebellar cortex morphogenesis"/>
    <property type="evidence" value="ECO:0000316"/>
    <property type="project" value="MGI"/>
</dbReference>
<dbReference type="GO" id="GO:0009953">
    <property type="term" value="P:dorsal/ventral pattern formation"/>
    <property type="evidence" value="ECO:0000316"/>
    <property type="project" value="MGI"/>
</dbReference>
<dbReference type="GO" id="GO:0009913">
    <property type="term" value="P:epidermal cell differentiation"/>
    <property type="evidence" value="ECO:0007669"/>
    <property type="project" value="Ensembl"/>
</dbReference>
<dbReference type="GO" id="GO:0097421">
    <property type="term" value="P:liver regeneration"/>
    <property type="evidence" value="ECO:0000315"/>
    <property type="project" value="MGI"/>
</dbReference>
<dbReference type="GO" id="GO:0030324">
    <property type="term" value="P:lung development"/>
    <property type="evidence" value="ECO:0000316"/>
    <property type="project" value="MGI"/>
</dbReference>
<dbReference type="GO" id="GO:0090090">
    <property type="term" value="P:negative regulation of canonical Wnt signaling pathway"/>
    <property type="evidence" value="ECO:0007669"/>
    <property type="project" value="Ensembl"/>
</dbReference>
<dbReference type="GO" id="GO:0060032">
    <property type="term" value="P:notochord regression"/>
    <property type="evidence" value="ECO:0000316"/>
    <property type="project" value="MGI"/>
</dbReference>
<dbReference type="GO" id="GO:0001649">
    <property type="term" value="P:osteoblast differentiation"/>
    <property type="evidence" value="ECO:0007669"/>
    <property type="project" value="Ensembl"/>
</dbReference>
<dbReference type="GO" id="GO:0021983">
    <property type="term" value="P:pituitary gland development"/>
    <property type="evidence" value="ECO:0000316"/>
    <property type="project" value="MGI"/>
</dbReference>
<dbReference type="GO" id="GO:0060045">
    <property type="term" value="P:positive regulation of cardiac muscle cell proliferation"/>
    <property type="evidence" value="ECO:0007669"/>
    <property type="project" value="Ensembl"/>
</dbReference>
<dbReference type="GO" id="GO:1902808">
    <property type="term" value="P:positive regulation of cell cycle G1/S phase transition"/>
    <property type="evidence" value="ECO:0007669"/>
    <property type="project" value="Ensembl"/>
</dbReference>
<dbReference type="GO" id="GO:0045740">
    <property type="term" value="P:positive regulation of DNA replication"/>
    <property type="evidence" value="ECO:0007669"/>
    <property type="project" value="Ensembl"/>
</dbReference>
<dbReference type="GO" id="GO:0045893">
    <property type="term" value="P:positive regulation of DNA-templated transcription"/>
    <property type="evidence" value="ECO:0000314"/>
    <property type="project" value="CACAO"/>
</dbReference>
<dbReference type="GO" id="GO:0045880">
    <property type="term" value="P:positive regulation of smoothened signaling pathway"/>
    <property type="evidence" value="ECO:0007669"/>
    <property type="project" value="Ensembl"/>
</dbReference>
<dbReference type="GO" id="GO:0045944">
    <property type="term" value="P:positive regulation of transcription by RNA polymerase II"/>
    <property type="evidence" value="ECO:0000314"/>
    <property type="project" value="MGI"/>
</dbReference>
<dbReference type="GO" id="GO:0030850">
    <property type="term" value="P:prostate gland development"/>
    <property type="evidence" value="ECO:0007669"/>
    <property type="project" value="Ensembl"/>
</dbReference>
<dbReference type="GO" id="GO:0009954">
    <property type="term" value="P:proximal/distal pattern formation"/>
    <property type="evidence" value="ECO:0000316"/>
    <property type="project" value="MGI"/>
</dbReference>
<dbReference type="GO" id="GO:0006355">
    <property type="term" value="P:regulation of DNA-templated transcription"/>
    <property type="evidence" value="ECO:0000266"/>
    <property type="project" value="ComplexPortal"/>
</dbReference>
<dbReference type="GO" id="GO:2000345">
    <property type="term" value="P:regulation of hepatocyte proliferation"/>
    <property type="evidence" value="ECO:0000315"/>
    <property type="project" value="MGI"/>
</dbReference>
<dbReference type="GO" id="GO:0045667">
    <property type="term" value="P:regulation of osteoblast differentiation"/>
    <property type="evidence" value="ECO:0000315"/>
    <property type="project" value="CACAO"/>
</dbReference>
<dbReference type="GO" id="GO:0009611">
    <property type="term" value="P:response to wounding"/>
    <property type="evidence" value="ECO:0000314"/>
    <property type="project" value="MGI"/>
</dbReference>
<dbReference type="GO" id="GO:0007165">
    <property type="term" value="P:signal transduction"/>
    <property type="evidence" value="ECO:0000304"/>
    <property type="project" value="MGI"/>
</dbReference>
<dbReference type="GO" id="GO:0007224">
    <property type="term" value="P:smoothened signaling pathway"/>
    <property type="evidence" value="ECO:0000314"/>
    <property type="project" value="MGI"/>
</dbReference>
<dbReference type="GO" id="GO:0007286">
    <property type="term" value="P:spermatid development"/>
    <property type="evidence" value="ECO:0007669"/>
    <property type="project" value="Ensembl"/>
</dbReference>
<dbReference type="GO" id="GO:0007283">
    <property type="term" value="P:spermatogenesis"/>
    <property type="evidence" value="ECO:0000314"/>
    <property type="project" value="MGI"/>
</dbReference>
<dbReference type="GO" id="GO:0007418">
    <property type="term" value="P:ventral midline development"/>
    <property type="evidence" value="ECO:0000316"/>
    <property type="project" value="MGI"/>
</dbReference>
<dbReference type="FunFam" id="3.30.160.60:FF:000019">
    <property type="entry name" value="GLI family zinc finger 3"/>
    <property type="match status" value="1"/>
</dbReference>
<dbReference type="FunFam" id="3.30.160.60:FF:000031">
    <property type="entry name" value="GLI family zinc finger 3"/>
    <property type="match status" value="1"/>
</dbReference>
<dbReference type="FunFam" id="3.30.160.60:FF:000036">
    <property type="entry name" value="GLI family zinc finger 3"/>
    <property type="match status" value="1"/>
</dbReference>
<dbReference type="FunFam" id="3.30.160.60:FF:000048">
    <property type="entry name" value="GLI family zinc finger 3"/>
    <property type="match status" value="1"/>
</dbReference>
<dbReference type="FunFam" id="3.30.160.60:FF:000068">
    <property type="entry name" value="GLI family zinc finger 3"/>
    <property type="match status" value="1"/>
</dbReference>
<dbReference type="Gene3D" id="3.30.160.60">
    <property type="entry name" value="Classic Zinc Finger"/>
    <property type="match status" value="5"/>
</dbReference>
<dbReference type="InterPro" id="IPR043359">
    <property type="entry name" value="GLI-like"/>
</dbReference>
<dbReference type="InterPro" id="IPR056436">
    <property type="entry name" value="Znf-C2H2_ZIC1-5/GLI1-3-like"/>
</dbReference>
<dbReference type="InterPro" id="IPR036236">
    <property type="entry name" value="Znf_C2H2_sf"/>
</dbReference>
<dbReference type="InterPro" id="IPR013087">
    <property type="entry name" value="Znf_C2H2_type"/>
</dbReference>
<dbReference type="PANTHER" id="PTHR45718">
    <property type="entry name" value="TRANSCRIPTIONAL ACTIVATOR CUBITUS INTERRUPTUS"/>
    <property type="match status" value="1"/>
</dbReference>
<dbReference type="PANTHER" id="PTHR45718:SF2">
    <property type="entry name" value="ZINC FINGER PROTEIN GLI1"/>
    <property type="match status" value="1"/>
</dbReference>
<dbReference type="Pfam" id="PF00096">
    <property type="entry name" value="zf-C2H2"/>
    <property type="match status" value="2"/>
</dbReference>
<dbReference type="Pfam" id="PF23561">
    <property type="entry name" value="zf-C2H2_15"/>
    <property type="match status" value="1"/>
</dbReference>
<dbReference type="SMART" id="SM00355">
    <property type="entry name" value="ZnF_C2H2"/>
    <property type="match status" value="5"/>
</dbReference>
<dbReference type="SUPFAM" id="SSF57667">
    <property type="entry name" value="beta-beta-alpha zinc fingers"/>
    <property type="match status" value="3"/>
</dbReference>
<dbReference type="PROSITE" id="PS00028">
    <property type="entry name" value="ZINC_FINGER_C2H2_1"/>
    <property type="match status" value="4"/>
</dbReference>
<dbReference type="PROSITE" id="PS50157">
    <property type="entry name" value="ZINC_FINGER_C2H2_2"/>
    <property type="match status" value="5"/>
</dbReference>
<comment type="function">
    <text evidence="1">Acts as a transcriptional activator. Binds to the DNA consensus sequence 5'-GACCACCCA-3'. Regulates the transcription of specific genes during normal development. Plays a role in craniofacial development and digital development, as well as development of the central nervous system and gastrointestinal tract. Mediates SHH signaling. Plays a role in cell proliferation and differentiation via its role in SHH signaling.</text>
</comment>
<comment type="subunit">
    <text evidence="1 4">Interacts with KIF7 (PubMed:19592253). Interacts with STK36. Interacts with ZIC1; the interaction enhances transcription activation. Interacts with SUFU; this inhibits transcriptional activation by GLI1 (By similarity).</text>
</comment>
<comment type="subcellular location">
    <subcellularLocation>
        <location evidence="1">Cytoplasm</location>
    </subcellularLocation>
    <subcellularLocation>
        <location evidence="1">Nucleus</location>
    </subcellularLocation>
    <text evidence="1">Tethered in the cytoplasm by binding to SUFU. Activation and translocation to the nucleus is promoted by interaction with STK36. Phosphorylation by ULK3 may promote nuclear localization. Translocation to the nucleus is promoted by interaction with ZIC1.</text>
</comment>
<comment type="developmental stage">
    <text>Is detected on days 10 through 18 of embryonic development. During gestation it is detected in meckels precartilage mesenchyme, the basis occipitus, rib mesenchymal condensations, primordial vertebral bodies, digital mesenchymal condensations in forefoot and hindfoot plates, the ependymal layer of the spinal cord, and the mesoderm of the gastrointestinal tract. Expression persists throughout gestation in developing bone and cartilage of the extremities, the ribs, and the vertebral bodies as well as the gastrointestinal tract mesoderm.</text>
</comment>
<comment type="PTM">
    <text evidence="1">Phosphorylated in vitro by ULK3.</text>
</comment>
<comment type="PTM">
    <text evidence="1">Acetylation at Lys-520 down-regulates transcriptional activity. Deacetylated by HDAC1.</text>
</comment>
<comment type="PTM">
    <text evidence="1">Ubiquitinated by the CRL2(FEM1B) complex, suppressing GLI1 transcriptional activator activity.</text>
</comment>
<comment type="similarity">
    <text evidence="5">Belongs to the GLI C2H2-type zinc-finger protein family.</text>
</comment>
<protein>
    <recommendedName>
        <fullName>Zinc finger protein GLI1</fullName>
    </recommendedName>
    <alternativeName>
        <fullName>Glioma-associated oncogene homolog</fullName>
    </alternativeName>
</protein>
<evidence type="ECO:0000250" key="1">
    <source>
        <dbReference type="UniProtKB" id="P08151"/>
    </source>
</evidence>
<evidence type="ECO:0000255" key="2">
    <source>
        <dbReference type="PROSITE-ProRule" id="PRU00042"/>
    </source>
</evidence>
<evidence type="ECO:0000256" key="3">
    <source>
        <dbReference type="SAM" id="MobiDB-lite"/>
    </source>
</evidence>
<evidence type="ECO:0000269" key="4">
    <source>
    </source>
</evidence>
<evidence type="ECO:0000305" key="5"/>
<sequence length="1111" mass="118560">MFNPMTPPQVNSYSEPCCLRPLHSQGVPSMGTEGLSGLPFCHQANFMSGSQGYGAARETSSCTEGSLFPPPPPPRSSVKLTKKRALSISPLSDASLDLQTVIRTSPSSLVAFINSRCTSPGGSYGHLSIGTMSPSLGFPPQMSHQKGTSPPYGVQPCVPHDSTRGSMMLHPQSRGPRATCQLKSELDMMVGKCPEDPLEGDMSSPNSTGTQDHLLGMLDGREDLEREEKPEPESVYETDCRWDGCSQEFDSQEQLVHHINSEHIHGERKEFVCHWGGCSRELRPFKAQYMLVVHMRRHTGEKPHKCTFEGCRKSYSRLENLKTHLRSHTGEKPYMCEQEGCSKAFSNASDRAKHQNRTHSNEKPYVCKLPGCTKRYTDPSSLRKHVKTVHGPDAHVTKRHRGDGPLPRAQPLSTVEPKREREGGSGREESRLTVPESAMPQQSPGAQSSCSSDHSPAGSAANTDSGVEMAGNAGGSTEDLSSLDEGPCVSATGLSTLRRLENLRLDQLHQLRPIGSRGLKLPSLTHAGAPVSRRLGPPVSLDRRSSSSSSMSSAYTVSRRSSLASPFPPGTPPENGASSLPGLTPAQHYMLRARYASARGSGTPPTAAHSLDRMGGLSVPPWRSRTEYPGYNPNAGVTRRASDPARAADHPAPARVQRFKSLGCVHTPPSVATGRNFDPHHPTSVYSPQPPSITENVAMDTRGLQEEPEVGTSVMGNGLNPYMDFSSTDTLGYGGPEGTAAEPYEARGPGSLPLGPGPPTNYGPGHCAQQVSYPDPTPENWGEFPSHAGVYPSNKAPGAAYSQCPRLEHYGQVQVKPEQGCPVGSDSTGLAPCLNAHPSEGSPGPQPLFSHHPQLPQPQYPQSGPYPQPPHGYLSTEPRLGLNFNPSSSHSTGQLKAQLVCNYVQSQQELLWEGRNRGGLPNQELPYQSPKFLGGSQVSQSPAKTPAAAAAAYGSGFAPASANHKSGSYPAPSPCHETFTVGVNRPSHRPAAPPRLLPPLSPCYGPLKVGDTNPSCGHPEVGRLGAGPALYPPPEGQVCNALDSLDLDNTQLDFVAILDEAQGLSPPLSHEQGDSSKNTPSPSGPPNMAVGNMSVLLGSLPGETQFLNSSA</sequence>
<feature type="chain" id="PRO_0000047198" description="Zinc finger protein GLI1">
    <location>
        <begin position="1"/>
        <end position="1111"/>
    </location>
</feature>
<feature type="zinc finger region" description="C2H2-type 1" evidence="2">
    <location>
        <begin position="238"/>
        <end position="263"/>
    </location>
</feature>
<feature type="zinc finger region" description="C2H2-type 2" evidence="2">
    <location>
        <begin position="271"/>
        <end position="298"/>
    </location>
</feature>
<feature type="zinc finger region" description="C2H2-type 3" evidence="2">
    <location>
        <begin position="304"/>
        <end position="328"/>
    </location>
</feature>
<feature type="zinc finger region" description="C2H2-type 4" evidence="2">
    <location>
        <begin position="334"/>
        <end position="359"/>
    </location>
</feature>
<feature type="zinc finger region" description="C2H2-type 5" evidence="2">
    <location>
        <begin position="365"/>
        <end position="390"/>
    </location>
</feature>
<feature type="region of interest" description="Disordered" evidence="3">
    <location>
        <begin position="52"/>
        <end position="78"/>
    </location>
</feature>
<feature type="region of interest" description="Interaction with SUFU" evidence="1">
    <location>
        <begin position="123"/>
        <end position="127"/>
    </location>
</feature>
<feature type="region of interest" description="Interaction with DNA" evidence="1">
    <location>
        <begin position="286"/>
        <end position="294"/>
    </location>
</feature>
<feature type="region of interest" description="Interaction with DNA" evidence="1">
    <location>
        <begin position="348"/>
        <end position="353"/>
    </location>
</feature>
<feature type="region of interest" description="Disordered" evidence="3">
    <location>
        <begin position="378"/>
        <end position="487"/>
    </location>
</feature>
<feature type="region of interest" description="Interaction with DNA" evidence="1">
    <location>
        <begin position="378"/>
        <end position="384"/>
    </location>
</feature>
<feature type="region of interest" description="Disordered" evidence="3">
    <location>
        <begin position="528"/>
        <end position="583"/>
    </location>
</feature>
<feature type="region of interest" description="Disordered" evidence="3">
    <location>
        <begin position="598"/>
        <end position="649"/>
    </location>
</feature>
<feature type="region of interest" description="Disordered" evidence="3">
    <location>
        <begin position="673"/>
        <end position="692"/>
    </location>
</feature>
<feature type="region of interest" description="Disordered" evidence="3">
    <location>
        <begin position="832"/>
        <end position="891"/>
    </location>
</feature>
<feature type="region of interest" description="Disordered" evidence="3">
    <location>
        <begin position="1064"/>
        <end position="1093"/>
    </location>
</feature>
<feature type="compositionally biased region" description="Basic and acidic residues" evidence="3">
    <location>
        <begin position="416"/>
        <end position="431"/>
    </location>
</feature>
<feature type="compositionally biased region" description="Polar residues" evidence="3">
    <location>
        <begin position="439"/>
        <end position="465"/>
    </location>
</feature>
<feature type="compositionally biased region" description="Low complexity" evidence="3">
    <location>
        <begin position="546"/>
        <end position="562"/>
    </location>
</feature>
<feature type="compositionally biased region" description="Basic and acidic residues" evidence="3">
    <location>
        <begin position="640"/>
        <end position="649"/>
    </location>
</feature>
<feature type="compositionally biased region" description="Pro residues" evidence="3">
    <location>
        <begin position="855"/>
        <end position="870"/>
    </location>
</feature>
<feature type="modified residue" description="N6-acetyllysine" evidence="1">
    <location>
        <position position="520"/>
    </location>
</feature>
<feature type="cross-link" description="Glycyl lysine isopeptide (Lys-Gly) (interchain with G-Cter in SUMO2)" evidence="1">
    <location>
        <position position="1008"/>
    </location>
</feature>
<feature type="sequence conflict" description="In Ref. 1; AAC09169." evidence="5" ref="1">
    <original>V</original>
    <variation>L</variation>
    <location>
        <position position="154"/>
    </location>
</feature>
<feature type="sequence conflict" description="In Ref. 1; AAC09169." evidence="5" ref="1">
    <original>H</original>
    <variation>Y</variation>
    <location>
        <position position="170"/>
    </location>
</feature>
<feature type="sequence conflict" description="In Ref. 2; BAA85004." evidence="5" ref="2">
    <original>S</original>
    <variation>A</variation>
    <location>
        <position position="173"/>
    </location>
</feature>
<feature type="sequence conflict" description="In Ref. 1; AAC09169." evidence="5" ref="1">
    <original>T</original>
    <variation>I</variation>
    <location>
        <position position="179"/>
    </location>
</feature>
<feature type="sequence conflict" description="In Ref. 1; AAC09169." evidence="5" ref="1">
    <original>P</original>
    <variation>R</variation>
    <location>
        <position position="194"/>
    </location>
</feature>
<feature type="sequence conflict" description="In Ref. 2; BAA85004." evidence="5" ref="2">
    <original>T</original>
    <variation>I</variation>
    <location>
        <position position="210"/>
    </location>
</feature>
<feature type="sequence conflict" description="In Ref. 1; AAC09169." evidence="5" ref="1">
    <original>F</original>
    <variation>S</variation>
    <location>
        <position position="271"/>
    </location>
</feature>
<feature type="sequence conflict" description="In Ref. 1; AAC09169." evidence="5" ref="1">
    <location>
        <position position="474"/>
    </location>
</feature>
<feature type="sequence conflict" description="In Ref. 1; AAC09169." evidence="5" ref="1">
    <original>FPP</original>
    <variation>LPT</variation>
    <location>
        <begin position="567"/>
        <end position="569"/>
    </location>
</feature>
<feature type="sequence conflict" description="In Ref. 1; AAC09169." evidence="5" ref="1">
    <original>E</original>
    <variation>D</variation>
    <location>
        <position position="707"/>
    </location>
</feature>
<feature type="sequence conflict" description="In Ref. 1; AAC09169." evidence="5" ref="1">
    <location>
        <position position="777"/>
    </location>
</feature>
<feature type="sequence conflict" description="In Ref. 1; AAC09169." evidence="5" ref="1">
    <original>G</original>
    <variation>V</variation>
    <location>
        <position position="864"/>
    </location>
</feature>
<feature type="sequence conflict" description="In Ref. 1; AAC09169." evidence="5" ref="1">
    <original>GL</original>
    <variation>RA</variation>
    <location>
        <begin position="919"/>
        <end position="920"/>
    </location>
</feature>
<feature type="sequence conflict" description="In Ref. 1; AAC09169." evidence="5" ref="1">
    <original>S</original>
    <variation>Y</variation>
    <location>
        <position position="936"/>
    </location>
</feature>
<feature type="sequence conflict" description="In Ref. 1; AAC09169." evidence="5" ref="1">
    <location>
        <position position="947"/>
    </location>
</feature>
<feature type="sequence conflict" description="In Ref. 1; AAC09169." evidence="5" ref="1">
    <original>AA</original>
    <variation>RR</variation>
    <location>
        <begin position="951"/>
        <end position="952"/>
    </location>
</feature>
<feature type="sequence conflict" description="In Ref. 1; AAC09169." evidence="5" ref="1">
    <original>G</original>
    <variation>R</variation>
    <location>
        <position position="967"/>
    </location>
</feature>
<feature type="sequence conflict" description="In Ref. 1; AAC09169." evidence="5" ref="1">
    <original>P</original>
    <variation>A</variation>
    <location>
        <position position="990"/>
    </location>
</feature>
<feature type="sequence conflict" description="In Ref. 1; AAC09169." evidence="5" ref="1">
    <original>A</original>
    <variation>P</variation>
    <location>
        <position position="1029"/>
    </location>
</feature>
<feature type="sequence conflict" description="In Ref. 1; AAC09169." evidence="5" ref="1">
    <original>QG</original>
    <variation>R</variation>
    <location>
        <begin position="1062"/>
        <end position="1063"/>
    </location>
</feature>
<keyword id="KW-0007">Acetylation</keyword>
<keyword id="KW-0010">Activator</keyword>
<keyword id="KW-0963">Cytoplasm</keyword>
<keyword id="KW-0217">Developmental protein</keyword>
<keyword id="KW-0221">Differentiation</keyword>
<keyword id="KW-0238">DNA-binding</keyword>
<keyword id="KW-1017">Isopeptide bond</keyword>
<keyword id="KW-0479">Metal-binding</keyword>
<keyword id="KW-0539">Nucleus</keyword>
<keyword id="KW-0597">Phosphoprotein</keyword>
<keyword id="KW-0656">Proto-oncogene</keyword>
<keyword id="KW-1185">Reference proteome</keyword>
<keyword id="KW-0677">Repeat</keyword>
<keyword id="KW-0804">Transcription</keyword>
<keyword id="KW-0805">Transcription regulation</keyword>
<keyword id="KW-0832">Ubl conjugation</keyword>
<keyword id="KW-0862">Zinc</keyword>
<keyword id="KW-0863">Zinc-finger</keyword>
<reference key="1">
    <citation type="journal article" date="1998" name="Gene">
        <title>Characterization of the promoter region and genomic organization of GLI, a member of the Sonic hedgehog-Patched signaling pathway.</title>
        <authorList>
            <person name="Liu C.Z."/>
            <person name="Yang J.T."/>
            <person name="Yoon J.W."/>
            <person name="Walterhouse D."/>
            <person name="Iannaccone P."/>
        </authorList>
    </citation>
    <scope>NUCLEOTIDE SEQUENCE [MRNA]</scope>
</reference>
<reference key="2">
    <citation type="journal article" date="1999" name="Development">
        <title>Regulation of Gli2 and Gli3 activities by an amino-terminal repression domain: implication of Gli2 and Gli3 as primary mediators of Shh signaling.</title>
        <authorList>
            <person name="Sasaki H."/>
            <person name="Nishizaki Y."/>
            <person name="Hui C."/>
            <person name="Nakafuku M."/>
            <person name="Kondoh H."/>
        </authorList>
    </citation>
    <scope>NUCLEOTIDE SEQUENCE [MRNA]</scope>
    <source>
        <strain>ICR</strain>
    </source>
</reference>
<reference key="3">
    <citation type="journal article" date="2009" name="PLoS Biol.">
        <title>Lineage-specific biology revealed by a finished genome assembly of the mouse.</title>
        <authorList>
            <person name="Church D.M."/>
            <person name="Goodstadt L."/>
            <person name="Hillier L.W."/>
            <person name="Zody M.C."/>
            <person name="Goldstein S."/>
            <person name="She X."/>
            <person name="Bult C.J."/>
            <person name="Agarwala R."/>
            <person name="Cherry J.L."/>
            <person name="DiCuccio M."/>
            <person name="Hlavina W."/>
            <person name="Kapustin Y."/>
            <person name="Meric P."/>
            <person name="Maglott D."/>
            <person name="Birtle Z."/>
            <person name="Marques A.C."/>
            <person name="Graves T."/>
            <person name="Zhou S."/>
            <person name="Teague B."/>
            <person name="Potamousis K."/>
            <person name="Churas C."/>
            <person name="Place M."/>
            <person name="Herschleb J."/>
            <person name="Runnheim R."/>
            <person name="Forrest D."/>
            <person name="Amos-Landgraf J."/>
            <person name="Schwartz D.C."/>
            <person name="Cheng Z."/>
            <person name="Lindblad-Toh K."/>
            <person name="Eichler E.E."/>
            <person name="Ponting C.P."/>
        </authorList>
    </citation>
    <scope>NUCLEOTIDE SEQUENCE [LARGE SCALE GENOMIC DNA]</scope>
    <source>
        <strain>C57BL/6J</strain>
    </source>
</reference>
<reference key="4">
    <citation type="submission" date="2005-07" db="EMBL/GenBank/DDBJ databases">
        <authorList>
            <person name="Mural R.J."/>
            <person name="Adams M.D."/>
            <person name="Myers E.W."/>
            <person name="Smith H.O."/>
            <person name="Venter J.C."/>
        </authorList>
    </citation>
    <scope>NUCLEOTIDE SEQUENCE [LARGE SCALE GENOMIC DNA]</scope>
</reference>
<reference key="5">
    <citation type="journal article" date="1993" name="Dev. Dyn.">
        <title>gli, a zinc finger transcription factor and oncogene, is expressed during normal mouse development.</title>
        <authorList>
            <person name="Waterhouse D."/>
            <person name="Ahmed M."/>
            <person name="Slusarski D."/>
            <person name="Kalamaras J."/>
            <person name="Boucher D."/>
            <person name="Holmgren R."/>
            <person name="Iannaccone P."/>
        </authorList>
    </citation>
    <scope>NUCLEOTIDE SEQUENCE [MRNA] OF 272-837</scope>
    <source>
        <strain>CD-1</strain>
        <tissue>Embryo</tissue>
    </source>
</reference>
<reference key="6">
    <citation type="journal article" date="2009" name="Curr. Biol.">
        <title>The mammalian Cos2 homolog Kif7 plays an essential role in modulating Hh signal transduction during development.</title>
        <authorList>
            <person name="Endoh-Yamagami S."/>
            <person name="Evangelista M."/>
            <person name="Wilson D."/>
            <person name="Wen X."/>
            <person name="Theunissen J.W."/>
            <person name="Phamluong K."/>
            <person name="Davis M."/>
            <person name="Scales S.J."/>
            <person name="Solloway M.J."/>
            <person name="de Sauvage F.J."/>
            <person name="Peterson A.S."/>
        </authorList>
    </citation>
    <scope>INTERACTION WITH KIF7</scope>
</reference>
<accession>P47806</accession>
<accession>G5E857</accession>
<accession>Q9QYK1</accession>
<organism>
    <name type="scientific">Mus musculus</name>
    <name type="common">Mouse</name>
    <dbReference type="NCBI Taxonomy" id="10090"/>
    <lineage>
        <taxon>Eukaryota</taxon>
        <taxon>Metazoa</taxon>
        <taxon>Chordata</taxon>
        <taxon>Craniata</taxon>
        <taxon>Vertebrata</taxon>
        <taxon>Euteleostomi</taxon>
        <taxon>Mammalia</taxon>
        <taxon>Eutheria</taxon>
        <taxon>Euarchontoglires</taxon>
        <taxon>Glires</taxon>
        <taxon>Rodentia</taxon>
        <taxon>Myomorpha</taxon>
        <taxon>Muroidea</taxon>
        <taxon>Muridae</taxon>
        <taxon>Murinae</taxon>
        <taxon>Mus</taxon>
        <taxon>Mus</taxon>
    </lineage>
</organism>
<proteinExistence type="evidence at protein level"/>
<gene>
    <name type="primary">Gli1</name>
    <name type="synonym">Gli</name>
</gene>
<name>GLI1_MOUSE</name>